<evidence type="ECO:0000250" key="1">
    <source>
        <dbReference type="UniProtKB" id="P27600"/>
    </source>
</evidence>
<evidence type="ECO:0000250" key="2">
    <source>
        <dbReference type="UniProtKB" id="P29992"/>
    </source>
</evidence>
<evidence type="ECO:0000250" key="3">
    <source>
        <dbReference type="UniProtKB" id="P50148"/>
    </source>
</evidence>
<evidence type="ECO:0000255" key="4">
    <source>
        <dbReference type="PROSITE-ProRule" id="PRU01230"/>
    </source>
</evidence>
<evidence type="ECO:0000269" key="5">
    <source>
    </source>
</evidence>
<evidence type="ECO:0000305" key="6"/>
<accession>P21278</accession>
<accession>Q61939</accession>
<feature type="chain" id="PRO_0000203747" description="Guanine nucleotide-binding protein subunit alpha-11">
    <location>
        <begin position="1"/>
        <end position="359"/>
    </location>
</feature>
<feature type="domain" description="G-alpha" evidence="4">
    <location>
        <begin position="38"/>
        <end position="359"/>
    </location>
</feature>
<feature type="region of interest" description="G1 motif" evidence="4">
    <location>
        <begin position="41"/>
        <end position="54"/>
    </location>
</feature>
<feature type="region of interest" description="G2 motif" evidence="4">
    <location>
        <begin position="178"/>
        <end position="186"/>
    </location>
</feature>
<feature type="region of interest" description="G3 motif" evidence="4">
    <location>
        <begin position="201"/>
        <end position="210"/>
    </location>
</feature>
<feature type="region of interest" description="G4 motif" evidence="4">
    <location>
        <begin position="270"/>
        <end position="277"/>
    </location>
</feature>
<feature type="region of interest" description="G5 motif" evidence="4">
    <location>
        <begin position="329"/>
        <end position="334"/>
    </location>
</feature>
<feature type="binding site" evidence="2">
    <location>
        <begin position="46"/>
        <end position="53"/>
    </location>
    <ligand>
        <name>GTP</name>
        <dbReference type="ChEBI" id="CHEBI:37565"/>
    </ligand>
</feature>
<feature type="binding site" evidence="1">
    <location>
        <position position="53"/>
    </location>
    <ligand>
        <name>Mg(2+)</name>
        <dbReference type="ChEBI" id="CHEBI:18420"/>
    </ligand>
</feature>
<feature type="binding site" evidence="1">
    <location>
        <begin position="180"/>
        <end position="183"/>
    </location>
    <ligand>
        <name>GTP</name>
        <dbReference type="ChEBI" id="CHEBI:37565"/>
    </ligand>
</feature>
<feature type="binding site" evidence="1">
    <location>
        <position position="186"/>
    </location>
    <ligand>
        <name>Mg(2+)</name>
        <dbReference type="ChEBI" id="CHEBI:18420"/>
    </ligand>
</feature>
<feature type="binding site" evidence="1">
    <location>
        <begin position="274"/>
        <end position="277"/>
    </location>
    <ligand>
        <name>GTP</name>
        <dbReference type="ChEBI" id="CHEBI:37565"/>
    </ligand>
</feature>
<feature type="binding site" evidence="1">
    <location>
        <position position="331"/>
    </location>
    <ligand>
        <name>GTP</name>
        <dbReference type="ChEBI" id="CHEBI:37565"/>
    </ligand>
</feature>
<feature type="lipid moiety-binding region" description="S-palmitoyl cysteine" evidence="2">
    <location>
        <position position="9"/>
    </location>
</feature>
<feature type="lipid moiety-binding region" description="S-palmitoyl cysteine" evidence="2">
    <location>
        <position position="10"/>
    </location>
</feature>
<feature type="sequence conflict" description="In Ref. 2; AAB36839." evidence="6" ref="2">
    <original>K</original>
    <variation>L</variation>
    <location>
        <position position="77"/>
    </location>
</feature>
<gene>
    <name type="primary">Gna11</name>
    <name type="synonym">Gna-11</name>
</gene>
<dbReference type="EMBL" id="M55411">
    <property type="protein sequence ID" value="AAA63305.1"/>
    <property type="molecule type" value="mRNA"/>
</dbReference>
<dbReference type="EMBL" id="U37413">
    <property type="protein sequence ID" value="AAB36839.1"/>
    <property type="molecule type" value="Genomic_DNA"/>
</dbReference>
<dbReference type="EMBL" id="U37411">
    <property type="protein sequence ID" value="AAB36839.1"/>
    <property type="status" value="JOINED"/>
    <property type="molecule type" value="Genomic_DNA"/>
</dbReference>
<dbReference type="EMBL" id="U37412">
    <property type="protein sequence ID" value="AAB36839.1"/>
    <property type="status" value="JOINED"/>
    <property type="molecule type" value="Genomic_DNA"/>
</dbReference>
<dbReference type="EMBL" id="M57617">
    <property type="protein sequence ID" value="AAA63301.1"/>
    <property type="molecule type" value="mRNA"/>
</dbReference>
<dbReference type="CCDS" id="CCDS24061.1"/>
<dbReference type="PIR" id="B33833">
    <property type="entry name" value="B33833"/>
</dbReference>
<dbReference type="PIR" id="B38414">
    <property type="entry name" value="RGMS11"/>
</dbReference>
<dbReference type="RefSeq" id="NP_034431.1">
    <property type="nucleotide sequence ID" value="NM_010301.4"/>
</dbReference>
<dbReference type="SMR" id="P21278"/>
<dbReference type="BioGRID" id="199961">
    <property type="interactions" value="17"/>
</dbReference>
<dbReference type="DIP" id="DIP-603N"/>
<dbReference type="FunCoup" id="P21278">
    <property type="interactions" value="1740"/>
</dbReference>
<dbReference type="IntAct" id="P21278">
    <property type="interactions" value="2"/>
</dbReference>
<dbReference type="STRING" id="10090.ENSMUSP00000043190"/>
<dbReference type="GlyGen" id="P21278">
    <property type="glycosylation" value="1 site, 1 O-linked glycan (1 site)"/>
</dbReference>
<dbReference type="iPTMnet" id="P21278"/>
<dbReference type="PhosphoSitePlus" id="P21278"/>
<dbReference type="SwissPalm" id="P21278"/>
<dbReference type="jPOST" id="P21278"/>
<dbReference type="PaxDb" id="10090-ENSMUSP00000043190"/>
<dbReference type="PeptideAtlas" id="P21278"/>
<dbReference type="ProteomicsDB" id="271410"/>
<dbReference type="Pumba" id="P21278"/>
<dbReference type="Antibodypedia" id="53288">
    <property type="antibodies" value="259 antibodies from 26 providers"/>
</dbReference>
<dbReference type="DNASU" id="14672"/>
<dbReference type="Ensembl" id="ENSMUST00000043604.6">
    <property type="protein sequence ID" value="ENSMUSP00000043190.6"/>
    <property type="gene ID" value="ENSMUSG00000034781.6"/>
</dbReference>
<dbReference type="GeneID" id="14672"/>
<dbReference type="KEGG" id="mmu:14672"/>
<dbReference type="UCSC" id="uc007gil.1">
    <property type="organism name" value="mouse"/>
</dbReference>
<dbReference type="AGR" id="MGI:95766"/>
<dbReference type="CTD" id="2767"/>
<dbReference type="MGI" id="MGI:95766">
    <property type="gene designation" value="Gna11"/>
</dbReference>
<dbReference type="VEuPathDB" id="HostDB:ENSMUSG00000034781"/>
<dbReference type="eggNOG" id="KOG0085">
    <property type="taxonomic scope" value="Eukaryota"/>
</dbReference>
<dbReference type="GeneTree" id="ENSGT00940000161033"/>
<dbReference type="HOGENOM" id="CLU_014184_6_0_1"/>
<dbReference type="InParanoid" id="P21278"/>
<dbReference type="OMA" id="GNCISQM"/>
<dbReference type="OrthoDB" id="5817230at2759"/>
<dbReference type="PhylomeDB" id="P21278"/>
<dbReference type="TreeFam" id="TF300673"/>
<dbReference type="Reactome" id="R-MMU-112043">
    <property type="pathway name" value="PLC beta mediated events"/>
</dbReference>
<dbReference type="Reactome" id="R-MMU-202040">
    <property type="pathway name" value="G-protein activation"/>
</dbReference>
<dbReference type="Reactome" id="R-MMU-399997">
    <property type="pathway name" value="Acetylcholine regulates insulin secretion"/>
</dbReference>
<dbReference type="Reactome" id="R-MMU-416476">
    <property type="pathway name" value="G alpha (q) signalling events"/>
</dbReference>
<dbReference type="Reactome" id="R-MMU-418592">
    <property type="pathway name" value="ADP signalling through P2Y purinoceptor 1"/>
</dbReference>
<dbReference type="Reactome" id="R-MMU-428930">
    <property type="pathway name" value="Thromboxane signalling through TP receptor"/>
</dbReference>
<dbReference type="Reactome" id="R-MMU-434316">
    <property type="pathway name" value="Fatty Acids bound to GPR40 (FFAR1) regulate insulin secretion"/>
</dbReference>
<dbReference type="Reactome" id="R-MMU-456926">
    <property type="pathway name" value="Thrombin signalling through proteinase activated receptors (PARs)"/>
</dbReference>
<dbReference type="Reactome" id="R-MMU-6814122">
    <property type="pathway name" value="Cooperation of PDCL (PhLP1) and TRiC/CCT in G-protein beta folding"/>
</dbReference>
<dbReference type="Reactome" id="R-MMU-9856530">
    <property type="pathway name" value="High laminar flow shear stress activates signaling by PIEZO1 and PECAM1:CDH5:KDR in endothelial cells"/>
</dbReference>
<dbReference type="Reactome" id="R-MMU-9860927">
    <property type="pathway name" value="Turbulent (oscillatory, disturbed) flow shear stress activates signaling by PIEZO1 and integrins in endothelial cells"/>
</dbReference>
<dbReference type="BioGRID-ORCS" id="14672">
    <property type="hits" value="5 hits in 81 CRISPR screens"/>
</dbReference>
<dbReference type="CD-CODE" id="CE726F99">
    <property type="entry name" value="Postsynaptic density"/>
</dbReference>
<dbReference type="ChiTaRS" id="Gna11">
    <property type="organism name" value="mouse"/>
</dbReference>
<dbReference type="PRO" id="PR:P21278"/>
<dbReference type="Proteomes" id="UP000000589">
    <property type="component" value="Chromosome 10"/>
</dbReference>
<dbReference type="RNAct" id="P21278">
    <property type="molecule type" value="protein"/>
</dbReference>
<dbReference type="Bgee" id="ENSMUSG00000034781">
    <property type="expression patterns" value="Expressed in small intestine Peyer's patch and 265 other cell types or tissues"/>
</dbReference>
<dbReference type="ExpressionAtlas" id="P21278">
    <property type="expression patterns" value="baseline and differential"/>
</dbReference>
<dbReference type="GO" id="GO:0005737">
    <property type="term" value="C:cytoplasm"/>
    <property type="evidence" value="ECO:0000250"/>
    <property type="project" value="UniProtKB"/>
</dbReference>
<dbReference type="GO" id="GO:0005834">
    <property type="term" value="C:heterotrimeric G-protein complex"/>
    <property type="evidence" value="ECO:0000247"/>
    <property type="project" value="MGI"/>
</dbReference>
<dbReference type="GO" id="GO:0005886">
    <property type="term" value="C:plasma membrane"/>
    <property type="evidence" value="ECO:0000314"/>
    <property type="project" value="MGI"/>
</dbReference>
<dbReference type="GO" id="GO:0045202">
    <property type="term" value="C:synapse"/>
    <property type="evidence" value="ECO:0007669"/>
    <property type="project" value="GOC"/>
</dbReference>
<dbReference type="GO" id="GO:0047391">
    <property type="term" value="F:alkylglycerophosphoethanolamine phosphodiesterase activity"/>
    <property type="evidence" value="ECO:0000266"/>
    <property type="project" value="MGI"/>
</dbReference>
<dbReference type="GO" id="GO:0030234">
    <property type="term" value="F:enzyme regulator activity"/>
    <property type="evidence" value="ECO:0000315"/>
    <property type="project" value="MGI"/>
</dbReference>
<dbReference type="GO" id="GO:0003925">
    <property type="term" value="F:G protein activity"/>
    <property type="evidence" value="ECO:0000315"/>
    <property type="project" value="MGI"/>
</dbReference>
<dbReference type="GO" id="GO:0001664">
    <property type="term" value="F:G protein-coupled receptor binding"/>
    <property type="evidence" value="ECO:0007669"/>
    <property type="project" value="InterPro"/>
</dbReference>
<dbReference type="GO" id="GO:0031683">
    <property type="term" value="F:G-protein beta/gamma-subunit complex binding"/>
    <property type="evidence" value="ECO:0007669"/>
    <property type="project" value="InterPro"/>
</dbReference>
<dbReference type="GO" id="GO:0005525">
    <property type="term" value="F:GTP binding"/>
    <property type="evidence" value="ECO:0007669"/>
    <property type="project" value="UniProtKB-KW"/>
</dbReference>
<dbReference type="GO" id="GO:0003924">
    <property type="term" value="F:GTPase activity"/>
    <property type="evidence" value="ECO:0000247"/>
    <property type="project" value="MGI"/>
</dbReference>
<dbReference type="GO" id="GO:0046872">
    <property type="term" value="F:metal ion binding"/>
    <property type="evidence" value="ECO:0007669"/>
    <property type="project" value="UniProtKB-KW"/>
</dbReference>
<dbReference type="GO" id="GO:0001508">
    <property type="term" value="P:action potential"/>
    <property type="evidence" value="ECO:0000314"/>
    <property type="project" value="MGI"/>
</dbReference>
<dbReference type="GO" id="GO:0071467">
    <property type="term" value="P:cellular response to pH"/>
    <property type="evidence" value="ECO:0000315"/>
    <property type="project" value="MGI"/>
</dbReference>
<dbReference type="GO" id="GO:1904888">
    <property type="term" value="P:cranial skeletal system development"/>
    <property type="evidence" value="ECO:0000316"/>
    <property type="project" value="MGI"/>
</dbReference>
<dbReference type="GO" id="GO:0048066">
    <property type="term" value="P:developmental pigmentation"/>
    <property type="evidence" value="ECO:0000315"/>
    <property type="project" value="MGI"/>
</dbReference>
<dbReference type="GO" id="GO:0086100">
    <property type="term" value="P:endothelin receptor signaling pathway"/>
    <property type="evidence" value="ECO:0000316"/>
    <property type="project" value="MGI"/>
</dbReference>
<dbReference type="GO" id="GO:0007186">
    <property type="term" value="P:G protein-coupled receptor signaling pathway"/>
    <property type="evidence" value="ECO:0000315"/>
    <property type="project" value="MGI"/>
</dbReference>
<dbReference type="GO" id="GO:0007507">
    <property type="term" value="P:heart development"/>
    <property type="evidence" value="ECO:0000315"/>
    <property type="project" value="MGI"/>
</dbReference>
<dbReference type="GO" id="GO:1990806">
    <property type="term" value="P:ligand-gated ion channel signaling pathway"/>
    <property type="evidence" value="ECO:0000315"/>
    <property type="project" value="MGI"/>
</dbReference>
<dbReference type="GO" id="GO:0060158">
    <property type="term" value="P:phospholipase C-activating dopamine receptor signaling pathway"/>
    <property type="evidence" value="ECO:0000316"/>
    <property type="project" value="MGI"/>
</dbReference>
<dbReference type="GO" id="GO:0007207">
    <property type="term" value="P:phospholipase C-activating G protein-coupled acetylcholine receptor signaling pathway"/>
    <property type="evidence" value="ECO:0000316"/>
    <property type="project" value="MGI"/>
</dbReference>
<dbReference type="GO" id="GO:0007200">
    <property type="term" value="P:phospholipase C-activating G protein-coupled receptor signaling pathway"/>
    <property type="evidence" value="ECO:0000315"/>
    <property type="project" value="MGI"/>
</dbReference>
<dbReference type="GO" id="GO:0032024">
    <property type="term" value="P:positive regulation of insulin secretion"/>
    <property type="evidence" value="ECO:0000315"/>
    <property type="project" value="MGI"/>
</dbReference>
<dbReference type="GO" id="GO:0008217">
    <property type="term" value="P:regulation of blood pressure"/>
    <property type="evidence" value="ECO:0000316"/>
    <property type="project" value="MGI"/>
</dbReference>
<dbReference type="GO" id="GO:0045634">
    <property type="term" value="P:regulation of melanocyte differentiation"/>
    <property type="evidence" value="ECO:0000315"/>
    <property type="project" value="MGI"/>
</dbReference>
<dbReference type="GO" id="GO:0001501">
    <property type="term" value="P:skeletal system development"/>
    <property type="evidence" value="ECO:0000315"/>
    <property type="project" value="MGI"/>
</dbReference>
<dbReference type="CDD" id="cd00066">
    <property type="entry name" value="G-alpha"/>
    <property type="match status" value="1"/>
</dbReference>
<dbReference type="FunFam" id="3.40.50.300:FF:003977">
    <property type="entry name" value="Guanine nucleotide-binding protein G(q) subunit alpha"/>
    <property type="match status" value="1"/>
</dbReference>
<dbReference type="FunFam" id="1.10.400.10:FF:000002">
    <property type="entry name" value="guanine nucleotide-binding protein G(Q) subunit alpha"/>
    <property type="match status" value="1"/>
</dbReference>
<dbReference type="FunFam" id="3.40.50.300:FF:000692">
    <property type="entry name" value="Guanine nucleotide-binding protein subunit alpha"/>
    <property type="match status" value="1"/>
</dbReference>
<dbReference type="Gene3D" id="1.10.400.10">
    <property type="entry name" value="GI Alpha 1, domain 2-like"/>
    <property type="match status" value="1"/>
</dbReference>
<dbReference type="Gene3D" id="3.40.50.300">
    <property type="entry name" value="P-loop containing nucleotide triphosphate hydrolases"/>
    <property type="match status" value="1"/>
</dbReference>
<dbReference type="InterPro" id="IPR000654">
    <property type="entry name" value="Gprotein_alpha_Q"/>
</dbReference>
<dbReference type="InterPro" id="IPR001019">
    <property type="entry name" value="Gprotein_alpha_su"/>
</dbReference>
<dbReference type="InterPro" id="IPR011025">
    <property type="entry name" value="GproteinA_insert"/>
</dbReference>
<dbReference type="InterPro" id="IPR027417">
    <property type="entry name" value="P-loop_NTPase"/>
</dbReference>
<dbReference type="PANTHER" id="PTHR10218">
    <property type="entry name" value="GTP-BINDING PROTEIN ALPHA SUBUNIT"/>
    <property type="match status" value="1"/>
</dbReference>
<dbReference type="PANTHER" id="PTHR10218:SF328">
    <property type="entry name" value="GUANINE NUCLEOTIDE-BINDING PROTEIN SUBUNIT ALPHA-11"/>
    <property type="match status" value="1"/>
</dbReference>
<dbReference type="Pfam" id="PF00503">
    <property type="entry name" value="G-alpha"/>
    <property type="match status" value="1"/>
</dbReference>
<dbReference type="PRINTS" id="PR00318">
    <property type="entry name" value="GPROTEINA"/>
</dbReference>
<dbReference type="PRINTS" id="PR00442">
    <property type="entry name" value="GPROTEINAQ"/>
</dbReference>
<dbReference type="SMART" id="SM00275">
    <property type="entry name" value="G_alpha"/>
    <property type="match status" value="1"/>
</dbReference>
<dbReference type="SUPFAM" id="SSF52540">
    <property type="entry name" value="P-loop containing nucleoside triphosphate hydrolases"/>
    <property type="match status" value="1"/>
</dbReference>
<dbReference type="SUPFAM" id="SSF47895">
    <property type="entry name" value="Transducin (alpha subunit), insertion domain"/>
    <property type="match status" value="1"/>
</dbReference>
<dbReference type="PROSITE" id="PS51882">
    <property type="entry name" value="G_ALPHA"/>
    <property type="match status" value="1"/>
</dbReference>
<organism>
    <name type="scientific">Mus musculus</name>
    <name type="common">Mouse</name>
    <dbReference type="NCBI Taxonomy" id="10090"/>
    <lineage>
        <taxon>Eukaryota</taxon>
        <taxon>Metazoa</taxon>
        <taxon>Chordata</taxon>
        <taxon>Craniata</taxon>
        <taxon>Vertebrata</taxon>
        <taxon>Euteleostomi</taxon>
        <taxon>Mammalia</taxon>
        <taxon>Eutheria</taxon>
        <taxon>Euarchontoglires</taxon>
        <taxon>Glires</taxon>
        <taxon>Rodentia</taxon>
        <taxon>Myomorpha</taxon>
        <taxon>Muroidea</taxon>
        <taxon>Muridae</taxon>
        <taxon>Murinae</taxon>
        <taxon>Mus</taxon>
        <taxon>Mus</taxon>
    </lineage>
</organism>
<proteinExistence type="evidence at protein level"/>
<protein>
    <recommendedName>
        <fullName>Guanine nucleotide-binding protein subunit alpha-11</fullName>
        <shortName>G alpha-11</shortName>
        <shortName>G-protein subunit alpha-11</shortName>
    </recommendedName>
</protein>
<sequence>MTLESMMACCLSDEVKESKRINAEIEKQLRRDKRDARRELKLLLLGTGESGKSTFIKQMRIIHGAGYSEEDKRGFTKLVYQNIFTAMQAMVRAMETLKILYKYEQNKANALLIREVDVEKVTTFEHQYVNAIKTLWSDPGVQECYDRRREFQLSDSAKYYLTDVDRIATVGYLPTQQDVLRVRVPTTGIIEYPFDLENIIFRMVDVGGQRSERRKWIHCFENVTSIMFLVALSEYDQVLVESDNENRMEESKALFRTIITYPWFQNSSVILFLNKKDLLEDKILHSHLVDYFPEFDGPQRDAQAAREFILKMFVDLNPDSDKIIYSHFTCATDTENIRFVFAAVKDTILQLNLKEYNLV</sequence>
<keyword id="KW-1003">Cell membrane</keyword>
<keyword id="KW-0963">Cytoplasm</keyword>
<keyword id="KW-0903">Direct protein sequencing</keyword>
<keyword id="KW-0342">GTP-binding</keyword>
<keyword id="KW-0378">Hydrolase</keyword>
<keyword id="KW-0449">Lipoprotein</keyword>
<keyword id="KW-0460">Magnesium</keyword>
<keyword id="KW-0472">Membrane</keyword>
<keyword id="KW-0479">Metal-binding</keyword>
<keyword id="KW-0547">Nucleotide-binding</keyword>
<keyword id="KW-0564">Palmitate</keyword>
<keyword id="KW-1185">Reference proteome</keyword>
<keyword id="KW-0807">Transducer</keyword>
<name>GNA11_MOUSE</name>
<comment type="function">
    <text evidence="2 5">Guanine nucleotide-binding proteins (G proteins) function as transducers downstream of G protein-coupled receptors (GPCRs) in numerous signaling cascades (PubMed:9687499). The alpha chain contains the guanine nucleotide binding site and alternates between an active, GTP-bound state and an inactive, GDP-bound state (PubMed:9687499). Signaling by an activated GPCR promotes GDP release and GTP binding (PubMed:9687499). The alpha subunit has a low GTPase activity that converts bound GTP to GDP, thereby terminating the signal (PubMed:9687499). Both GDP release and GTP hydrolysis are modulated by numerous regulatory proteins (PubMed:9687499). Signaling is mediated via phospholipase C-beta-dependent inositol lipid hydrolysis for signal propagation: activates phospholipase C-beta: following GPCR activation, GNA11 activates PLC-beta (PLCB1, PLCB2, PLCB3 or PLCB4), leading to production of diacylglycerol (DAG) and inositol 1,4,5-trisphosphate (IP3) (PubMed:9687499). Transduces FFAR4 signaling in response to long-chain fatty acids (LCFAs) (By similarity). Together with GNAQ, required for heart development (PubMed:9687499). In the respiratory epithelium, transmits OXGR1-dependent signals that lead to downstream intracellular Ca(2+) release and mucocilliary clearance of airborne pathogens.</text>
</comment>
<comment type="catalytic activity">
    <reaction evidence="3">
        <text>GTP + H2O = GDP + phosphate + H(+)</text>
        <dbReference type="Rhea" id="RHEA:19669"/>
        <dbReference type="ChEBI" id="CHEBI:15377"/>
        <dbReference type="ChEBI" id="CHEBI:15378"/>
        <dbReference type="ChEBI" id="CHEBI:37565"/>
        <dbReference type="ChEBI" id="CHEBI:43474"/>
        <dbReference type="ChEBI" id="CHEBI:58189"/>
    </reaction>
    <physiologicalReaction direction="left-to-right" evidence="3">
        <dbReference type="Rhea" id="RHEA:19670"/>
    </physiologicalReaction>
</comment>
<comment type="subunit">
    <text evidence="2">G proteins are composed of 3 units; alpha, beta and gamma. The alpha chain contains the guanine nucleotide binding site. Interacts with RGS22. Interacts with NTSR1.</text>
</comment>
<comment type="subcellular location">
    <subcellularLocation>
        <location evidence="2">Cell membrane</location>
        <topology evidence="2">Lipid-anchor</topology>
    </subcellularLocation>
    <subcellularLocation>
        <location evidence="2">Cytoplasm</location>
    </subcellularLocation>
</comment>
<comment type="disruption phenotype">
    <text evidence="5">No visible phenoptype (PubMed:9687499). Mice lacking Gnaq and Gna11 are embryonic lethal due to cardiomyocyte hypoplasia (PubMed:9687499). Mice lacking Gnaq and with one single intact copy of Gna11, as well as mice lacking Gna11 and with one single intact copy of Gnaq die shortly after birth; lethality is caused by heart malformations (PubMed:9687499). Newborns display craniofacial defects (PubMed:9687499).</text>
</comment>
<comment type="similarity">
    <text evidence="6">Belongs to the G-alpha family. G(q) subfamily.</text>
</comment>
<reference key="1">
    <citation type="journal article" date="1990" name="Proc. Natl. Acad. Sci. U.S.A.">
        <title>G protein diversity: a distinct class of alpha subunits is present in vertebrates and invertebrates.</title>
        <authorList>
            <person name="Strathmann M."/>
            <person name="Simon M.I."/>
        </authorList>
    </citation>
    <scope>NUCLEOTIDE SEQUENCE [MRNA]</scope>
</reference>
<reference key="2">
    <citation type="journal article" date="1996" name="Genomics">
        <title>Gene structure of murine Gna11 and Gna15: tandemly duplicated Gq class G protein alpha subunit genes.</title>
        <authorList>
            <person name="Davignon I."/>
            <person name="Barnard M."/>
            <person name="Gavrilova O."/>
            <person name="Sweet K.K."/>
            <person name="Wilkie T.M."/>
        </authorList>
    </citation>
    <scope>NUCLEOTIDE SEQUENCE [GENOMIC DNA]</scope>
    <source>
        <strain>129/Sv</strain>
    </source>
</reference>
<reference key="3">
    <citation type="submission" date="2007-04" db="UniProtKB">
        <authorList>
            <person name="Lubec G."/>
            <person name="Kang S.U."/>
        </authorList>
    </citation>
    <scope>PROTEIN SEQUENCE OF 21-27; 121-133; 159-166; 203-210; 312-338 AND 346-354</scope>
    <scope>IDENTIFICATION BY MASS SPECTROMETRY</scope>
    <source>
        <strain>C57BL/6J</strain>
        <tissue>Brain</tissue>
    </source>
</reference>
<reference key="4">
    <citation type="journal article" date="1989" name="Proc. Natl. Acad. Sci. U.S.A.">
        <title>Diversity of the G-protein family: sequences from five additional alpha subunits in the mouse.</title>
        <authorList>
            <person name="Strathmann M."/>
            <person name="Wilkie T.M."/>
            <person name="Simon M.I."/>
        </authorList>
    </citation>
    <scope>NUCLEOTIDE SEQUENCE [MRNA] OF 211-271</scope>
</reference>
<reference key="5">
    <citation type="journal article" date="2010" name="Cell">
        <title>A tissue-specific atlas of mouse protein phosphorylation and expression.</title>
        <authorList>
            <person name="Huttlin E.L."/>
            <person name="Jedrychowski M.P."/>
            <person name="Elias J.E."/>
            <person name="Goswami T."/>
            <person name="Rad R."/>
            <person name="Beausoleil S.A."/>
            <person name="Villen J."/>
            <person name="Haas W."/>
            <person name="Sowa M.E."/>
            <person name="Gygi S.P."/>
        </authorList>
    </citation>
    <scope>IDENTIFICATION BY MASS SPECTROMETRY [LARGE SCALE ANALYSIS]</scope>
    <source>
        <tissue>Brain</tissue>
        <tissue>Brown adipose tissue</tissue>
        <tissue>Heart</tissue>
        <tissue>Kidney</tissue>
        <tissue>Liver</tissue>
        <tissue>Lung</tissue>
        <tissue>Pancreas</tissue>
        <tissue>Spleen</tissue>
        <tissue>Testis</tissue>
    </source>
</reference>
<reference key="6">
    <citation type="journal article" date="1998" name="EMBO J.">
        <title>Embryonic cardiomyocyte hypoplasia and craniofacial defects in G alpha q/G alpha 11-mutant mice.</title>
        <authorList>
            <person name="Offermanns S."/>
            <person name="Zhao L.P."/>
            <person name="Gohla A."/>
            <person name="Sarosi I."/>
            <person name="Simon M.I."/>
            <person name="Wilkie T.M."/>
        </authorList>
    </citation>
    <scope>FUNCTION</scope>
    <scope>DISRUPTION PHENOTYPE</scope>
</reference>